<sequence length="178" mass="20467">MRDRWLKRAVGARHYRPWLTERGSLTRRLQQHSRQFAVQPLHLARKKPPLAEAQLLQVLPRQHTLQRDVILRCDGEAVVFAHSLLPQQAMRGTWRGLGRLGSHSLGSALFADPRMCRGALQYKKLSPQHFLYRLAVAHIPAMRGPIWARRSVFRLGRKAVLVSELFLPSVLKLPLINK</sequence>
<keyword id="KW-0963">Cytoplasm</keyword>
<keyword id="KW-0456">Lyase</keyword>
<keyword id="KW-0670">Pyruvate</keyword>
<keyword id="KW-1185">Reference proteome</keyword>
<keyword id="KW-0831">Ubiquinone biosynthesis</keyword>
<organism>
    <name type="scientific">Methylobacillus flagellatus (strain ATCC 51484 / DSM 6875 / VKM B-1610 / KT)</name>
    <dbReference type="NCBI Taxonomy" id="265072"/>
    <lineage>
        <taxon>Bacteria</taxon>
        <taxon>Pseudomonadati</taxon>
        <taxon>Pseudomonadota</taxon>
        <taxon>Betaproteobacteria</taxon>
        <taxon>Nitrosomonadales</taxon>
        <taxon>Methylophilaceae</taxon>
        <taxon>Methylobacillus</taxon>
    </lineage>
</organism>
<proteinExistence type="inferred from homology"/>
<feature type="chain" id="PRO_0000255909" description="Probable chorismate pyruvate-lyase">
    <location>
        <begin position="1"/>
        <end position="178"/>
    </location>
</feature>
<feature type="binding site" evidence="1">
    <location>
        <position position="67"/>
    </location>
    <ligand>
        <name>substrate</name>
    </ligand>
</feature>
<feature type="binding site" evidence="1">
    <location>
        <position position="105"/>
    </location>
    <ligand>
        <name>substrate</name>
    </ligand>
</feature>
<feature type="binding site" evidence="1">
    <location>
        <position position="164"/>
    </location>
    <ligand>
        <name>substrate</name>
    </ligand>
</feature>
<dbReference type="EC" id="4.1.3.40" evidence="1"/>
<dbReference type="EMBL" id="CP000284">
    <property type="protein sequence ID" value="ABE48324.1"/>
    <property type="molecule type" value="Genomic_DNA"/>
</dbReference>
<dbReference type="SMR" id="Q1GXB4"/>
<dbReference type="STRING" id="265072.Mfla_0053"/>
<dbReference type="KEGG" id="mfa:Mfla_0053"/>
<dbReference type="eggNOG" id="COG3161">
    <property type="taxonomic scope" value="Bacteria"/>
</dbReference>
<dbReference type="HOGENOM" id="CLU_096824_2_0_4"/>
<dbReference type="OrthoDB" id="8606430at2"/>
<dbReference type="UniPathway" id="UPA00232"/>
<dbReference type="Proteomes" id="UP000002440">
    <property type="component" value="Chromosome"/>
</dbReference>
<dbReference type="GO" id="GO:0005829">
    <property type="term" value="C:cytosol"/>
    <property type="evidence" value="ECO:0007669"/>
    <property type="project" value="TreeGrafter"/>
</dbReference>
<dbReference type="GO" id="GO:0008813">
    <property type="term" value="F:chorismate lyase activity"/>
    <property type="evidence" value="ECO:0007669"/>
    <property type="project" value="UniProtKB-UniRule"/>
</dbReference>
<dbReference type="GO" id="GO:0042866">
    <property type="term" value="P:pyruvate biosynthetic process"/>
    <property type="evidence" value="ECO:0007669"/>
    <property type="project" value="UniProtKB-UniRule"/>
</dbReference>
<dbReference type="GO" id="GO:0006744">
    <property type="term" value="P:ubiquinone biosynthetic process"/>
    <property type="evidence" value="ECO:0007669"/>
    <property type="project" value="UniProtKB-UniRule"/>
</dbReference>
<dbReference type="Gene3D" id="3.40.1410.10">
    <property type="entry name" value="Chorismate lyase-like"/>
    <property type="match status" value="1"/>
</dbReference>
<dbReference type="HAMAP" id="MF_01632">
    <property type="entry name" value="UbiC"/>
    <property type="match status" value="1"/>
</dbReference>
<dbReference type="InterPro" id="IPR007440">
    <property type="entry name" value="Chorismate--pyruvate_lyase"/>
</dbReference>
<dbReference type="InterPro" id="IPR028978">
    <property type="entry name" value="Chorismate_lyase_/UTRA_dom_sf"/>
</dbReference>
<dbReference type="PANTHER" id="PTHR38683">
    <property type="entry name" value="CHORISMATE PYRUVATE-LYASE"/>
    <property type="match status" value="1"/>
</dbReference>
<dbReference type="PANTHER" id="PTHR38683:SF1">
    <property type="entry name" value="CHORISMATE PYRUVATE-LYASE"/>
    <property type="match status" value="1"/>
</dbReference>
<dbReference type="Pfam" id="PF04345">
    <property type="entry name" value="Chor_lyase"/>
    <property type="match status" value="1"/>
</dbReference>
<dbReference type="SUPFAM" id="SSF64288">
    <property type="entry name" value="Chorismate lyase-like"/>
    <property type="match status" value="1"/>
</dbReference>
<reference key="1">
    <citation type="submission" date="2006-03" db="EMBL/GenBank/DDBJ databases">
        <title>Complete sequence of Methylobacillus flagellatus KT.</title>
        <authorList>
            <consortium name="US DOE Joint Genome Institute"/>
            <person name="Copeland A."/>
            <person name="Lucas S."/>
            <person name="Lapidus A."/>
            <person name="Barry K."/>
            <person name="Detter J.C."/>
            <person name="Glavina del Rio T."/>
            <person name="Hammon N."/>
            <person name="Israni S."/>
            <person name="Dalin E."/>
            <person name="Tice H."/>
            <person name="Pitluck S."/>
            <person name="Brettin T."/>
            <person name="Bruce D."/>
            <person name="Han C."/>
            <person name="Tapia R."/>
            <person name="Saunders E."/>
            <person name="Gilna P."/>
            <person name="Schmutz J."/>
            <person name="Larimer F."/>
            <person name="Land M."/>
            <person name="Kyrpides N."/>
            <person name="Anderson I."/>
            <person name="Richardson P."/>
        </authorList>
    </citation>
    <scope>NUCLEOTIDE SEQUENCE [LARGE SCALE GENOMIC DNA]</scope>
    <source>
        <strain>ATCC 51484 / DSM 6875 / VKM B-1610 / KT</strain>
    </source>
</reference>
<protein>
    <recommendedName>
        <fullName evidence="1">Probable chorismate pyruvate-lyase</fullName>
        <shortName evidence="1">CL</shortName>
        <shortName evidence="1">CPL</shortName>
        <ecNumber evidence="1">4.1.3.40</ecNumber>
    </recommendedName>
</protein>
<comment type="function">
    <text evidence="1">Removes the pyruvyl group from chorismate, with concomitant aromatization of the ring, to provide 4-hydroxybenzoate (4HB) for the ubiquinone pathway.</text>
</comment>
<comment type="catalytic activity">
    <reaction evidence="1">
        <text>chorismate = 4-hydroxybenzoate + pyruvate</text>
        <dbReference type="Rhea" id="RHEA:16505"/>
        <dbReference type="ChEBI" id="CHEBI:15361"/>
        <dbReference type="ChEBI" id="CHEBI:17879"/>
        <dbReference type="ChEBI" id="CHEBI:29748"/>
        <dbReference type="EC" id="4.1.3.40"/>
    </reaction>
</comment>
<comment type="pathway">
    <text evidence="1">Cofactor biosynthesis; ubiquinone biosynthesis.</text>
</comment>
<comment type="subcellular location">
    <subcellularLocation>
        <location evidence="1">Cytoplasm</location>
    </subcellularLocation>
</comment>
<comment type="similarity">
    <text evidence="1">Belongs to the UbiC family.</text>
</comment>
<evidence type="ECO:0000255" key="1">
    <source>
        <dbReference type="HAMAP-Rule" id="MF_01632"/>
    </source>
</evidence>
<gene>
    <name evidence="1" type="primary">ubiC</name>
    <name type="ordered locus">Mfla_0053</name>
</gene>
<accession>Q1GXB4</accession>
<name>UBIC_METFK</name>